<accession>Q06710</accession>
<accession>Q09155</accession>
<accession>Q16337</accession>
<accession>Q16338</accession>
<accession>Q16339</accession>
<accession>Q4ZG35</accession>
<accession>Q96J49</accession>
<comment type="function">
    <text>Transcription factor for the thyroid-specific expression of the genes exclusively expressed in the thyroid cell type, maintaining the functional differentiation of such cells.</text>
</comment>
<comment type="subunit">
    <text evidence="7">Interacts with WWTR1.</text>
</comment>
<comment type="interaction">
    <interactant intactId="EBI-2683132">
        <id>Q06710</id>
    </interactant>
    <interactant intactId="EBI-1245761">
        <id>Q00526</id>
        <label>CDK3</label>
    </interactant>
    <organismsDiffer>false</organismsDiffer>
    <experiments>3</experiments>
</comment>
<comment type="interaction">
    <interactant intactId="EBI-2683132">
        <id>Q06710</id>
    </interactant>
    <interactant intactId="EBI-6918542">
        <id>Q8TEW6</id>
        <label>DOK4</label>
    </interactant>
    <organismsDiffer>false</organismsDiffer>
    <experiments>3</experiments>
</comment>
<comment type="interaction">
    <interactant intactId="EBI-2683132">
        <id>Q06710</id>
    </interactant>
    <interactant intactId="EBI-10188645">
        <id>O75603</id>
        <label>GCM2</label>
    </interactant>
    <organismsDiffer>false</organismsDiffer>
    <experiments>3</experiments>
</comment>
<comment type="interaction">
    <interactant intactId="EBI-2683132">
        <id>Q06710</id>
    </interactant>
    <interactant intactId="EBI-1752118">
        <id>P31273</id>
        <label>HOXC8</label>
    </interactant>
    <organismsDiffer>false</organismsDiffer>
    <experiments>3</experiments>
</comment>
<comment type="interaction">
    <interactant intactId="EBI-2683132">
        <id>Q06710</id>
    </interactant>
    <interactant intactId="EBI-1779423">
        <id>P31274</id>
        <label>HOXC9</label>
    </interactant>
    <organismsDiffer>false</organismsDiffer>
    <experiments>3</experiments>
</comment>
<comment type="interaction">
    <interactant intactId="EBI-2683132">
        <id>Q06710</id>
    </interactant>
    <interactant intactId="EBI-2341787">
        <id>Q17RB8</id>
        <label>LONRF1</label>
    </interactant>
    <organismsDiffer>false</organismsDiffer>
    <experiments>3</experiments>
</comment>
<comment type="interaction">
    <interactant intactId="EBI-2683132">
        <id>Q06710</id>
    </interactant>
    <interactant intactId="EBI-346967">
        <id>P19338</id>
        <label>NCL</label>
    </interactant>
    <organismsDiffer>false</organismsDiffer>
    <experiments>2</experiments>
</comment>
<comment type="interaction">
    <interactant intactId="EBI-2683132">
        <id>Q06710</id>
    </interactant>
    <interactant intactId="EBI-743154">
        <id>Q9UBE0</id>
        <label>SAE1</label>
    </interactant>
    <organismsDiffer>false</organismsDiffer>
    <experiments>3</experiments>
</comment>
<comment type="interaction">
    <interactant intactId="EBI-2683132">
        <id>Q06710</id>
    </interactant>
    <interactant intactId="EBI-2683145">
        <id>Q9NRX5</id>
        <label>SERINC1</label>
    </interactant>
    <organismsDiffer>false</organismsDiffer>
    <experiments>2</experiments>
</comment>
<comment type="interaction">
    <interactant intactId="EBI-2683132">
        <id>Q06710</id>
    </interactant>
    <interactant intactId="EBI-12035119">
        <id>O75177-5</id>
        <label>SS18L1</label>
    </interactant>
    <organismsDiffer>false</organismsDiffer>
    <experiments>3</experiments>
</comment>
<comment type="interaction">
    <interactant intactId="EBI-2683132">
        <id>Q06710</id>
    </interactant>
    <interactant intactId="EBI-11741437">
        <id>Q08117-2</id>
        <label>TLE5</label>
    </interactant>
    <organismsDiffer>false</organismsDiffer>
    <experiments>3</experiments>
</comment>
<comment type="subcellular location">
    <subcellularLocation>
        <location>Nucleus</location>
    </subcellularLocation>
</comment>
<comment type="alternative products">
    <event type="alternative splicing"/>
    <isoform>
        <id>Q06710-1</id>
        <name>1</name>
        <name>Pax8a</name>
        <sequence type="displayed"/>
    </isoform>
    <isoform>
        <id>Q06710-2</id>
        <name>2</name>
        <name>Pax8b</name>
        <sequence type="described" ref="VSP_002372"/>
    </isoform>
    <isoform>
        <id>Q06710-3</id>
        <name>3</name>
        <name>Pax8c</name>
        <sequence type="described" ref="VSP_002373"/>
    </isoform>
    <isoform>
        <id>Q06710-4</id>
        <name>4</name>
        <name>Pax8d</name>
        <sequence type="described" ref="VSP_002374"/>
    </isoform>
    <isoform>
        <id>Q06710-5</id>
        <name>5</name>
        <name>Pax8e</name>
        <sequence type="described" ref="VSP_002375"/>
    </isoform>
</comment>
<comment type="tissue specificity">
    <text>Expressed in the excretory system, thyroid gland and Wilms tumors.</text>
</comment>
<comment type="developmental stage">
    <text>In developing excretory system, during thyroid differentiation and in adult thyroid.</text>
</comment>
<comment type="disease" evidence="4 5 8">
    <disease id="DI-00363">
        <name>Hypothyroidism, congenital, non-goitrous, 2</name>
        <acronym>CHNG2</acronym>
        <description>A disease characterized by thyroid dysgenesis, the most frequent cause of congenital hypothyroidism, accounting for 85% of case. The thyroid gland can be completely absent (athyreosis), ectopically located and/or severely hypoplastic. Ectopic thyroid gland is the most frequent malformation, with thyroid tissue being found most often at the base of the tongue.</description>
        <dbReference type="MIM" id="218700"/>
    </disease>
    <text>The disease is caused by variants affecting the gene represented in this entry.</text>
</comment>
<comment type="online information" name="Atlas of Genetics and Cytogenetics in Oncology and Haematology">
    <link uri="https://atlasgeneticsoncology.org/gene/382/PAX8"/>
</comment>
<evidence type="ECO:0000250" key="1">
    <source>
        <dbReference type="UniProtKB" id="Q00288"/>
    </source>
</evidence>
<evidence type="ECO:0000255" key="2">
    <source>
        <dbReference type="PROSITE-ProRule" id="PRU00381"/>
    </source>
</evidence>
<evidence type="ECO:0000256" key="3">
    <source>
        <dbReference type="SAM" id="MobiDB-lite"/>
    </source>
</evidence>
<evidence type="ECO:0000269" key="4">
    <source>
    </source>
</evidence>
<evidence type="ECO:0000269" key="5">
    <source>
    </source>
</evidence>
<evidence type="ECO:0000269" key="6">
    <source>
    </source>
</evidence>
<evidence type="ECO:0000269" key="7">
    <source>
    </source>
</evidence>
<evidence type="ECO:0000269" key="8">
    <source>
    </source>
</evidence>
<evidence type="ECO:0000303" key="9">
    <source>
    </source>
</evidence>
<evidence type="ECO:0000303" key="10">
    <source>
    </source>
</evidence>
<evidence type="ECO:0000305" key="11"/>
<evidence type="ECO:0007829" key="12">
    <source>
        <dbReference type="PDB" id="2K27"/>
    </source>
</evidence>
<proteinExistence type="evidence at protein level"/>
<gene>
    <name type="primary">PAX8</name>
</gene>
<sequence>MPHNSIRSGHGGLNQLGGAFVNGRPLPEVVRQRIVDLAHQGVRPCDISRQLRVSHGCVSKILGRYYETGSIRPGVIGGSKPKVATPKVVEKIGDYKRQNPTMFAWEIRDRLLAEGVCDNDTVPSVSSINRIIRTKVQQPFNLPMDSCVATKSLSPGHTLIPSSAVTPPESPQSDSLGSTYSINGLLGIAQPGSDKRKMDDSDQDSCRLSIDSQSSSSGPRKHLRTDAFSQHHLEPLECPFERQHYPEAYASPSHTKGEQGLYPLPLLNSTLDDGKATLTPSNTPLGRNLSTHQTYPVVADPHSPFAIKQETPEVSSSSSTPSSLSSSAFLDLQQVGSGVPPFNAFPHAASVYGQFTGQALLSGREMVGPTLPGYPPHIPTSGQGSYASSAIAGMVAGSEYSGNAYGHTPYSSYSEAWRFPNSSLLSSPYYYSSTSRPSAPPTTATAFDHL</sequence>
<feature type="chain" id="PRO_0000050197" description="Paired box protein Pax-8">
    <location>
        <begin position="1"/>
        <end position="450"/>
    </location>
</feature>
<feature type="DNA-binding region" description="Paired" evidence="2">
    <location>
        <begin position="9"/>
        <end position="135"/>
    </location>
</feature>
<feature type="region of interest" description="PAI subdomain" evidence="2">
    <location>
        <begin position="12"/>
        <end position="68"/>
    </location>
</feature>
<feature type="region of interest" description="RED subdomain" evidence="2">
    <location>
        <begin position="87"/>
        <end position="135"/>
    </location>
</feature>
<feature type="region of interest" description="Disordered" evidence="3">
    <location>
        <begin position="159"/>
        <end position="222"/>
    </location>
</feature>
<feature type="compositionally biased region" description="Polar residues" evidence="3">
    <location>
        <begin position="159"/>
        <end position="182"/>
    </location>
</feature>
<feature type="modified residue" description="Phosphoserine" evidence="1">
    <location>
        <position position="303"/>
    </location>
</feature>
<feature type="splice variant" id="VSP_002374" description="In isoform 4." evidence="10">
    <original>GLYPLPLLNSTLDDGKATLTPSNTPLGRNLSTHQTYPVVADPHSPFAIKQETPEVSSSSSTPSSLSSSAFLDLQQVGSGVPPFNAFPHAASVYGQFTGQALLSGREMVGPTLPGYPPHIPTSGQGSYASSAIAGMVAGSEYSGNAYGHTPYSSYSEAWRFPNSSLLSSPYYYSSTSRPSAPPTTATAFDHL</original>
    <variation>GERWWGPRCPDTHPTSPPADRAAMPPLPSQAWWQEVNTLAMPMATPPTPPTARPGASPTPAC</variation>
    <location>
        <begin position="260"/>
        <end position="450"/>
    </location>
</feature>
<feature type="splice variant" id="VSP_002375" description="In isoform 5." evidence="10">
    <original>GLYPLPLLNSTLDDGKATLTPSNTPLGRNLSTHQTYPVVADPHSPFAIKQETPEVSSSSSTPSSLSSSAFLDLQQVGSGVPPFNAFPHAASVYGQFTGQALLSGREMVGPTLPGYPPHIPTSGQGSYASSAIAGMVAGSEYSGNAYGHTPYSSYSEAWRFPNSSLLSSPYYYSSTSRPSAPPTTATAFDHL</original>
    <variation>EVNTLAMPMATPPTPPTARPGASPTPAC</variation>
    <location>
        <begin position="260"/>
        <end position="450"/>
    </location>
</feature>
<feature type="splice variant" id="VSP_002373" description="In isoform 3." evidence="10">
    <original>DPHSPFAIKQETPEVSSSSSTPSSLSSSAFLDLQQVGSGVPPFNAFPHAASVYGQFTGQALLSGREMVGPTLPGYPPHIPTSGQGSYASSAIAGMVAGSEYSGNAYGHTPYSSYSEAWRFPNSSLLSSPYYYSSTSRPSAPPTTATAFDHL</original>
    <variation>APPFWICSKSAPGSRPSMPFPMLPPCTGSSRARPSSQGERWWGPRCPDTHPTSPPADRAAMPPLPSQAWWQEVNTLAMPMATPPTPPTARPGASPTPAC</variation>
    <location>
        <begin position="300"/>
        <end position="450"/>
    </location>
</feature>
<feature type="splice variant" id="VSP_002372" description="In isoform 2." evidence="9">
    <location>
        <begin position="300"/>
        <end position="362"/>
    </location>
</feature>
<feature type="sequence variant" id="VAR_012769" description="In CHNG2; loss of activity; dbSNP:rs104893657." evidence="8">
    <original>R</original>
    <variation>H</variation>
    <location>
        <position position="31"/>
    </location>
</feature>
<feature type="sequence variant" id="VAR_012770" description="In CHNG2; loss of activity; dbSNP:rs104893656." evidence="5">
    <original>Q</original>
    <variation>P</variation>
    <location>
        <position position="40"/>
    </location>
</feature>
<feature type="sequence variant" id="VAR_012771" description="In CHNG2; loss of activity; dbSNP:rs104893659." evidence="4">
    <original>C</original>
    <variation>Y</variation>
    <location>
        <position position="57"/>
    </location>
</feature>
<feature type="sequence variant" id="VAR_012772" description="In CHNG2; loss of activity; dbSNP:rs104893658." evidence="8">
    <original>L</original>
    <variation>R</variation>
    <location>
        <position position="62"/>
    </location>
</feature>
<feature type="sequence variant" id="VAR_012773" description="In dbSNP:rs3188996." evidence="6">
    <original>F</original>
    <variation>L</variation>
    <location>
        <position position="329"/>
    </location>
</feature>
<feature type="sequence conflict" description="In Ref. 1; X69699." evidence="11" ref="1">
    <original>F</original>
    <variation>L</variation>
    <location>
        <position position="305"/>
    </location>
</feature>
<feature type="sequence conflict" description="In Ref. 1; X69699." evidence="11" ref="1">
    <original>S</original>
    <variation>C</variation>
    <location>
        <position position="322"/>
    </location>
</feature>
<feature type="sequence conflict" description="In Ref. 1; X69699." evidence="11" ref="1">
    <original>R</original>
    <variation>G</variation>
    <location>
        <position position="418"/>
    </location>
</feature>
<feature type="strand" evidence="12">
    <location>
        <begin position="21"/>
        <end position="23"/>
    </location>
</feature>
<feature type="helix" evidence="12">
    <location>
        <begin position="28"/>
        <end position="40"/>
    </location>
</feature>
<feature type="helix" evidence="12">
    <location>
        <begin position="44"/>
        <end position="51"/>
    </location>
</feature>
<feature type="helix" evidence="12">
    <location>
        <begin position="56"/>
        <end position="62"/>
    </location>
</feature>
<feature type="helix" evidence="12">
    <location>
        <begin position="88"/>
        <end position="98"/>
    </location>
</feature>
<feature type="strand" evidence="12">
    <location>
        <begin position="100"/>
        <end position="102"/>
    </location>
</feature>
<feature type="helix" evidence="12">
    <location>
        <begin position="104"/>
        <end position="114"/>
    </location>
</feature>
<feature type="turn" evidence="12">
    <location>
        <begin position="119"/>
        <end position="121"/>
    </location>
</feature>
<feature type="helix" evidence="12">
    <location>
        <begin position="125"/>
        <end position="135"/>
    </location>
</feature>
<reference key="1">
    <citation type="journal article" date="1992" name="Development">
        <title>PAX8, a human paired box gene: isolation and expression in developing thyroid, kidney and Wilms' tumors.</title>
        <authorList>
            <person name="Poleev A."/>
            <person name="Fickenscher H."/>
            <person name="Mundlos S."/>
            <person name="Winterpacht A."/>
            <person name="Zabel B."/>
            <person name="Fidler A."/>
            <person name="Gruss P."/>
            <person name="Plachov D."/>
        </authorList>
    </citation>
    <scope>NUCLEOTIDE SEQUENCE [MRNA] (ISOFORMS 1 AND 2)</scope>
    <scope>VARIANT LEU-329</scope>
    <source>
        <tissue>Kidney</tissue>
    </source>
</reference>
<reference key="2">
    <citation type="journal article" date="1993" name="Mol. Cell. Biol.">
        <title>Alternative splicing of Pax-8 gene transcripts is developmentally regulated and generates isoforms with different transactivation properties.</title>
        <authorList>
            <person name="Kozmik Z."/>
            <person name="Kurzbauer R."/>
            <person name="Doerfler P."/>
            <person name="Busslinger M."/>
        </authorList>
    </citation>
    <scope>NUCLEOTIDE SEQUENCE [MRNA] (ISOFORM 1)</scope>
    <scope>ALTERNATIVE SPLICING</scope>
    <source>
        <tissue>Kidney</tissue>
    </source>
</reference>
<reference key="3">
    <citation type="journal article" date="1995" name="Eur. J. Biochem.">
        <title>Distinct functional properties of three human paired-box-protein, PAX8, isoforms generated by alternative splicing in thyroid, kidney and Wilms' tumors.</title>
        <authorList>
            <person name="Poleev A."/>
            <person name="Wendler F."/>
            <person name="Fickenscher H."/>
            <person name="Zannini M.S."/>
            <person name="Yaginuma K."/>
            <person name="Abbott C."/>
            <person name="Plachov D."/>
        </authorList>
    </citation>
    <scope>NUCLEOTIDE SEQUENCE [MRNA] (ISOFORMS 1; 3; 4 AND 5)</scope>
</reference>
<reference key="4">
    <citation type="journal article" date="2004" name="Nat. Genet.">
        <title>Complete sequencing and characterization of 21,243 full-length human cDNAs.</title>
        <authorList>
            <person name="Ota T."/>
            <person name="Suzuki Y."/>
            <person name="Nishikawa T."/>
            <person name="Otsuki T."/>
            <person name="Sugiyama T."/>
            <person name="Irie R."/>
            <person name="Wakamatsu A."/>
            <person name="Hayashi K."/>
            <person name="Sato H."/>
            <person name="Nagai K."/>
            <person name="Kimura K."/>
            <person name="Makita H."/>
            <person name="Sekine M."/>
            <person name="Obayashi M."/>
            <person name="Nishi T."/>
            <person name="Shibahara T."/>
            <person name="Tanaka T."/>
            <person name="Ishii S."/>
            <person name="Yamamoto J."/>
            <person name="Saito K."/>
            <person name="Kawai Y."/>
            <person name="Isono Y."/>
            <person name="Nakamura Y."/>
            <person name="Nagahari K."/>
            <person name="Murakami K."/>
            <person name="Yasuda T."/>
            <person name="Iwayanagi T."/>
            <person name="Wagatsuma M."/>
            <person name="Shiratori A."/>
            <person name="Sudo H."/>
            <person name="Hosoiri T."/>
            <person name="Kaku Y."/>
            <person name="Kodaira H."/>
            <person name="Kondo H."/>
            <person name="Sugawara M."/>
            <person name="Takahashi M."/>
            <person name="Kanda K."/>
            <person name="Yokoi T."/>
            <person name="Furuya T."/>
            <person name="Kikkawa E."/>
            <person name="Omura Y."/>
            <person name="Abe K."/>
            <person name="Kamihara K."/>
            <person name="Katsuta N."/>
            <person name="Sato K."/>
            <person name="Tanikawa M."/>
            <person name="Yamazaki M."/>
            <person name="Ninomiya K."/>
            <person name="Ishibashi T."/>
            <person name="Yamashita H."/>
            <person name="Murakawa K."/>
            <person name="Fujimori K."/>
            <person name="Tanai H."/>
            <person name="Kimata M."/>
            <person name="Watanabe M."/>
            <person name="Hiraoka S."/>
            <person name="Chiba Y."/>
            <person name="Ishida S."/>
            <person name="Ono Y."/>
            <person name="Takiguchi S."/>
            <person name="Watanabe S."/>
            <person name="Yosida M."/>
            <person name="Hotuta T."/>
            <person name="Kusano J."/>
            <person name="Kanehori K."/>
            <person name="Takahashi-Fujii A."/>
            <person name="Hara H."/>
            <person name="Tanase T.-O."/>
            <person name="Nomura Y."/>
            <person name="Togiya S."/>
            <person name="Komai F."/>
            <person name="Hara R."/>
            <person name="Takeuchi K."/>
            <person name="Arita M."/>
            <person name="Imose N."/>
            <person name="Musashino K."/>
            <person name="Yuuki H."/>
            <person name="Oshima A."/>
            <person name="Sasaki N."/>
            <person name="Aotsuka S."/>
            <person name="Yoshikawa Y."/>
            <person name="Matsunawa H."/>
            <person name="Ichihara T."/>
            <person name="Shiohata N."/>
            <person name="Sano S."/>
            <person name="Moriya S."/>
            <person name="Momiyama H."/>
            <person name="Satoh N."/>
            <person name="Takami S."/>
            <person name="Terashima Y."/>
            <person name="Suzuki O."/>
            <person name="Nakagawa S."/>
            <person name="Senoh A."/>
            <person name="Mizoguchi H."/>
            <person name="Goto Y."/>
            <person name="Shimizu F."/>
            <person name="Wakebe H."/>
            <person name="Hishigaki H."/>
            <person name="Watanabe T."/>
            <person name="Sugiyama A."/>
            <person name="Takemoto M."/>
            <person name="Kawakami B."/>
            <person name="Yamazaki M."/>
            <person name="Watanabe K."/>
            <person name="Kumagai A."/>
            <person name="Itakura S."/>
            <person name="Fukuzumi Y."/>
            <person name="Fujimori Y."/>
            <person name="Komiyama M."/>
            <person name="Tashiro H."/>
            <person name="Tanigami A."/>
            <person name="Fujiwara T."/>
            <person name="Ono T."/>
            <person name="Yamada K."/>
            <person name="Fujii Y."/>
            <person name="Ozaki K."/>
            <person name="Hirao M."/>
            <person name="Ohmori Y."/>
            <person name="Kawabata A."/>
            <person name="Hikiji T."/>
            <person name="Kobatake N."/>
            <person name="Inagaki H."/>
            <person name="Ikema Y."/>
            <person name="Okamoto S."/>
            <person name="Okitani R."/>
            <person name="Kawakami T."/>
            <person name="Noguchi S."/>
            <person name="Itoh T."/>
            <person name="Shigeta K."/>
            <person name="Senba T."/>
            <person name="Matsumura K."/>
            <person name="Nakajima Y."/>
            <person name="Mizuno T."/>
            <person name="Morinaga M."/>
            <person name="Sasaki M."/>
            <person name="Togashi T."/>
            <person name="Oyama M."/>
            <person name="Hata H."/>
            <person name="Watanabe M."/>
            <person name="Komatsu T."/>
            <person name="Mizushima-Sugano J."/>
            <person name="Satoh T."/>
            <person name="Shirai Y."/>
            <person name="Takahashi Y."/>
            <person name="Nakagawa K."/>
            <person name="Okumura K."/>
            <person name="Nagase T."/>
            <person name="Nomura N."/>
            <person name="Kikuchi H."/>
            <person name="Masuho Y."/>
            <person name="Yamashita R."/>
            <person name="Nakai K."/>
            <person name="Yada T."/>
            <person name="Nakamura Y."/>
            <person name="Ohara O."/>
            <person name="Isogai T."/>
            <person name="Sugano S."/>
        </authorList>
    </citation>
    <scope>NUCLEOTIDE SEQUENCE [LARGE SCALE MRNA] (ISOFORM 1)</scope>
    <source>
        <tissue>Cervix</tissue>
    </source>
</reference>
<reference key="5">
    <citation type="journal article" date="2005" name="Nature">
        <title>Generation and annotation of the DNA sequences of human chromosomes 2 and 4.</title>
        <authorList>
            <person name="Hillier L.W."/>
            <person name="Graves T.A."/>
            <person name="Fulton R.S."/>
            <person name="Fulton L.A."/>
            <person name="Pepin K.H."/>
            <person name="Minx P."/>
            <person name="Wagner-McPherson C."/>
            <person name="Layman D."/>
            <person name="Wylie K."/>
            <person name="Sekhon M."/>
            <person name="Becker M.C."/>
            <person name="Fewell G.A."/>
            <person name="Delehaunty K.D."/>
            <person name="Miner T.L."/>
            <person name="Nash W.E."/>
            <person name="Kremitzki C."/>
            <person name="Oddy L."/>
            <person name="Du H."/>
            <person name="Sun H."/>
            <person name="Bradshaw-Cordum H."/>
            <person name="Ali J."/>
            <person name="Carter J."/>
            <person name="Cordes M."/>
            <person name="Harris A."/>
            <person name="Isak A."/>
            <person name="van Brunt A."/>
            <person name="Nguyen C."/>
            <person name="Du F."/>
            <person name="Courtney L."/>
            <person name="Kalicki J."/>
            <person name="Ozersky P."/>
            <person name="Abbott S."/>
            <person name="Armstrong J."/>
            <person name="Belter E.A."/>
            <person name="Caruso L."/>
            <person name="Cedroni M."/>
            <person name="Cotton M."/>
            <person name="Davidson T."/>
            <person name="Desai A."/>
            <person name="Elliott G."/>
            <person name="Erb T."/>
            <person name="Fronick C."/>
            <person name="Gaige T."/>
            <person name="Haakenson W."/>
            <person name="Haglund K."/>
            <person name="Holmes A."/>
            <person name="Harkins R."/>
            <person name="Kim K."/>
            <person name="Kruchowski S.S."/>
            <person name="Strong C.M."/>
            <person name="Grewal N."/>
            <person name="Goyea E."/>
            <person name="Hou S."/>
            <person name="Levy A."/>
            <person name="Martinka S."/>
            <person name="Mead K."/>
            <person name="McLellan M.D."/>
            <person name="Meyer R."/>
            <person name="Randall-Maher J."/>
            <person name="Tomlinson C."/>
            <person name="Dauphin-Kohlberg S."/>
            <person name="Kozlowicz-Reilly A."/>
            <person name="Shah N."/>
            <person name="Swearengen-Shahid S."/>
            <person name="Snider J."/>
            <person name="Strong J.T."/>
            <person name="Thompson J."/>
            <person name="Yoakum M."/>
            <person name="Leonard S."/>
            <person name="Pearman C."/>
            <person name="Trani L."/>
            <person name="Radionenko M."/>
            <person name="Waligorski J.E."/>
            <person name="Wang C."/>
            <person name="Rock S.M."/>
            <person name="Tin-Wollam A.-M."/>
            <person name="Maupin R."/>
            <person name="Latreille P."/>
            <person name="Wendl M.C."/>
            <person name="Yang S.-P."/>
            <person name="Pohl C."/>
            <person name="Wallis J.W."/>
            <person name="Spieth J."/>
            <person name="Bieri T.A."/>
            <person name="Berkowicz N."/>
            <person name="Nelson J.O."/>
            <person name="Osborne J."/>
            <person name="Ding L."/>
            <person name="Meyer R."/>
            <person name="Sabo A."/>
            <person name="Shotland Y."/>
            <person name="Sinha P."/>
            <person name="Wohldmann P.E."/>
            <person name="Cook L.L."/>
            <person name="Hickenbotham M.T."/>
            <person name="Eldred J."/>
            <person name="Williams D."/>
            <person name="Jones T.A."/>
            <person name="She X."/>
            <person name="Ciccarelli F.D."/>
            <person name="Izaurralde E."/>
            <person name="Taylor J."/>
            <person name="Schmutz J."/>
            <person name="Myers R.M."/>
            <person name="Cox D.R."/>
            <person name="Huang X."/>
            <person name="McPherson J.D."/>
            <person name="Mardis E.R."/>
            <person name="Clifton S.W."/>
            <person name="Warren W.C."/>
            <person name="Chinwalla A.T."/>
            <person name="Eddy S.R."/>
            <person name="Marra M.A."/>
            <person name="Ovcharenko I."/>
            <person name="Furey T.S."/>
            <person name="Miller W."/>
            <person name="Eichler E.E."/>
            <person name="Bork P."/>
            <person name="Suyama M."/>
            <person name="Torrents D."/>
            <person name="Waterston R.H."/>
            <person name="Wilson R.K."/>
        </authorList>
    </citation>
    <scope>NUCLEOTIDE SEQUENCE [LARGE SCALE GENOMIC DNA]</scope>
</reference>
<reference key="6">
    <citation type="submission" date="2005-07" db="EMBL/GenBank/DDBJ databases">
        <authorList>
            <person name="Mural R.J."/>
            <person name="Istrail S."/>
            <person name="Sutton G.G."/>
            <person name="Florea L."/>
            <person name="Halpern A.L."/>
            <person name="Mobarry C.M."/>
            <person name="Lippert R."/>
            <person name="Walenz B."/>
            <person name="Shatkay H."/>
            <person name="Dew I."/>
            <person name="Miller J.R."/>
            <person name="Flanigan M.J."/>
            <person name="Edwards N.J."/>
            <person name="Bolanos R."/>
            <person name="Fasulo D."/>
            <person name="Halldorsson B.V."/>
            <person name="Hannenhalli S."/>
            <person name="Turner R."/>
            <person name="Yooseph S."/>
            <person name="Lu F."/>
            <person name="Nusskern D.R."/>
            <person name="Shue B.C."/>
            <person name="Zheng X.H."/>
            <person name="Zhong F."/>
            <person name="Delcher A.L."/>
            <person name="Huson D.H."/>
            <person name="Kravitz S.A."/>
            <person name="Mouchard L."/>
            <person name="Reinert K."/>
            <person name="Remington K.A."/>
            <person name="Clark A.G."/>
            <person name="Waterman M.S."/>
            <person name="Eichler E.E."/>
            <person name="Adams M.D."/>
            <person name="Hunkapiller M.W."/>
            <person name="Myers E.W."/>
            <person name="Venter J.C."/>
        </authorList>
    </citation>
    <scope>NUCLEOTIDE SEQUENCE [LARGE SCALE GENOMIC DNA]</scope>
</reference>
<reference key="7">
    <citation type="journal article" date="2004" name="Genome Res.">
        <title>The status, quality, and expansion of the NIH full-length cDNA project: the Mammalian Gene Collection (MGC).</title>
        <authorList>
            <consortium name="The MGC Project Team"/>
        </authorList>
    </citation>
    <scope>NUCLEOTIDE SEQUENCE [LARGE SCALE MRNA] (ISOFORM 1)</scope>
    <source>
        <tissue>Kidney</tissue>
    </source>
</reference>
<reference key="8">
    <citation type="journal article" date="2009" name="Exp. Cell Res.">
        <title>TAZ is a coactivator for Pax8 and TTF-1, two transcription factors involved in thyroid differentiation.</title>
        <authorList>
            <person name="Di Palma T."/>
            <person name="D'Andrea B."/>
            <person name="Liguori G.L."/>
            <person name="Liguoro A."/>
            <person name="de Cristofaro T."/>
            <person name="Del Prete D."/>
            <person name="Pappalardo A."/>
            <person name="Mascia A."/>
            <person name="Zannini M."/>
        </authorList>
    </citation>
    <scope>INTERACTION WITH WWTR1</scope>
</reference>
<reference key="9">
    <citation type="journal article" date="1998" name="Nat. Genet.">
        <title>PAX8 mutations associated with congenital hypothyroidism caused by thyroid dysgenesis.</title>
        <authorList>
            <person name="Macchia P.E."/>
            <person name="Lapi P."/>
            <person name="Krude H."/>
            <person name="Pirro M.T."/>
            <person name="Missero C."/>
            <person name="Chiovato L."/>
            <person name="Souabni A."/>
            <person name="Baserga M."/>
            <person name="Tassi V."/>
            <person name="Pinchera A."/>
            <person name="Fenzi G."/>
            <person name="Gruters A."/>
            <person name="Busslinger M."/>
            <person name="Di Lauro R."/>
        </authorList>
    </citation>
    <scope>VARIANTS CHNG2 HIS-31 AND ARG-62</scope>
</reference>
<reference key="10">
    <citation type="journal article" date="2001" name="J. Clin. Endocrinol. Metab.">
        <title>Autosomal dominant transmission of congenital thyroid hypoplasia due to loss-of-function mutation of PAX8.</title>
        <authorList>
            <person name="Vilain C."/>
            <person name="Rydlewski C."/>
            <person name="Duprez L."/>
            <person name="Heinrichs C."/>
            <person name="Abramowicz M."/>
            <person name="Malvaux P."/>
            <person name="Renneboog B."/>
            <person name="Parma J."/>
            <person name="Costagliola S."/>
            <person name="Vassart G."/>
        </authorList>
    </citation>
    <scope>VARIANT CHNG2 TYR-57</scope>
</reference>
<reference key="11">
    <citation type="journal article" date="2001" name="J. Clin. Endocrinol. Metab.">
        <title>A novel mutation (Q40P) in PAX8 associated with congenital hypothyroidism and thyroid hypoplasia: evidence for phenotypic variability in mother and child.</title>
        <authorList>
            <person name="Congdon T."/>
            <person name="Nguyen L.Q."/>
            <person name="Nogueira C.R."/>
            <person name="Habiby R.L."/>
            <person name="Medeiros-Neto G."/>
            <person name="Kopp P."/>
        </authorList>
    </citation>
    <scope>VARIANT CHNG2 PRO-40</scope>
</reference>
<reference key="12">
    <citation type="journal article" date="2008" name="J. Biol. Chem.">
        <title>The solution structure of DNA-free Pax-8 paired box domain accounts for redox regulation of transcriptional activity in the pax protein family.</title>
        <authorList>
            <person name="Codutti L."/>
            <person name="van Ingen H."/>
            <person name="Vascotto C."/>
            <person name="Fogolari F."/>
            <person name="Corazza A."/>
            <person name="Tell G."/>
            <person name="Quadrifoglio F."/>
            <person name="Viglino P."/>
            <person name="Boelens R."/>
            <person name="Esposito G."/>
        </authorList>
    </citation>
    <scope>STRUCTURE BY NMR OF 1-143</scope>
</reference>
<name>PAX8_HUMAN</name>
<dbReference type="EMBL" id="X69699">
    <property type="status" value="NOT_ANNOTATED_CDS"/>
    <property type="molecule type" value="mRNA"/>
</dbReference>
<dbReference type="EMBL" id="L19606">
    <property type="protein sequence ID" value="AAA03539.1"/>
    <property type="molecule type" value="mRNA"/>
</dbReference>
<dbReference type="EMBL" id="S77904">
    <property type="protein sequence ID" value="AAB34216.1"/>
    <property type="molecule type" value="mRNA"/>
</dbReference>
<dbReference type="EMBL" id="S77905">
    <property type="protein sequence ID" value="AAB34217.2"/>
    <property type="molecule type" value="mRNA"/>
</dbReference>
<dbReference type="EMBL" id="S77906">
    <property type="protein sequence ID" value="AAB34218.2"/>
    <property type="molecule type" value="mRNA"/>
</dbReference>
<dbReference type="EMBL" id="AK292191">
    <property type="protein sequence ID" value="BAF84880.1"/>
    <property type="molecule type" value="mRNA"/>
</dbReference>
<dbReference type="EMBL" id="AC016683">
    <property type="protein sequence ID" value="AAX88880.1"/>
    <property type="molecule type" value="Genomic_DNA"/>
</dbReference>
<dbReference type="EMBL" id="CH471217">
    <property type="protein sequence ID" value="EAW73629.1"/>
    <property type="molecule type" value="Genomic_DNA"/>
</dbReference>
<dbReference type="EMBL" id="BC001060">
    <property type="protein sequence ID" value="AAH01060.1"/>
    <property type="molecule type" value="mRNA"/>
</dbReference>
<dbReference type="CCDS" id="CCDS42735.1">
    <molecule id="Q06710-5"/>
</dbReference>
<dbReference type="CCDS" id="CCDS42736.1">
    <molecule id="Q06710-4"/>
</dbReference>
<dbReference type="CCDS" id="CCDS46398.1">
    <molecule id="Q06710-1"/>
</dbReference>
<dbReference type="CCDS" id="CCDS46399.1">
    <molecule id="Q06710-3"/>
</dbReference>
<dbReference type="PIR" id="A54429">
    <property type="entry name" value="A54429"/>
</dbReference>
<dbReference type="PIR" id="I53340">
    <property type="entry name" value="I53340"/>
</dbReference>
<dbReference type="RefSeq" id="NP_003457.1">
    <molecule id="Q06710-1"/>
    <property type="nucleotide sequence ID" value="NM_003466.4"/>
</dbReference>
<dbReference type="RefSeq" id="NP_039246.1">
    <molecule id="Q06710-3"/>
    <property type="nucleotide sequence ID" value="NM_013952.4"/>
</dbReference>
<dbReference type="RefSeq" id="NP_039247.1">
    <molecule id="Q06710-4"/>
    <property type="nucleotide sequence ID" value="NM_013953.4"/>
</dbReference>
<dbReference type="RefSeq" id="NP_054698.1">
    <molecule id="Q06710-5"/>
    <property type="nucleotide sequence ID" value="NM_013992.4"/>
</dbReference>
<dbReference type="PDB" id="2K27">
    <property type="method" value="NMR"/>
    <property type="chains" value="A=1-143"/>
</dbReference>
<dbReference type="PDBsum" id="2K27"/>
<dbReference type="BMRB" id="Q06710"/>
<dbReference type="SMR" id="Q06710"/>
<dbReference type="BioGRID" id="113604">
    <property type="interactions" value="105"/>
</dbReference>
<dbReference type="FunCoup" id="Q06710">
    <property type="interactions" value="1108"/>
</dbReference>
<dbReference type="IntAct" id="Q06710">
    <property type="interactions" value="104"/>
</dbReference>
<dbReference type="STRING" id="9606.ENSP00000263334"/>
<dbReference type="ChEMBL" id="CHEMBL2362980"/>
<dbReference type="GlyGen" id="Q06710">
    <property type="glycosylation" value="3 sites, 1 O-linked glycan (1 site)"/>
</dbReference>
<dbReference type="iPTMnet" id="Q06710"/>
<dbReference type="PhosphoSitePlus" id="Q06710"/>
<dbReference type="BioMuta" id="PAX8"/>
<dbReference type="DMDM" id="215273928"/>
<dbReference type="MassIVE" id="Q06710"/>
<dbReference type="PaxDb" id="9606-ENSP00000263334"/>
<dbReference type="PeptideAtlas" id="Q06710"/>
<dbReference type="ProteomicsDB" id="58470">
    <molecule id="Q06710-1"/>
</dbReference>
<dbReference type="ProteomicsDB" id="58471">
    <molecule id="Q06710-2"/>
</dbReference>
<dbReference type="ProteomicsDB" id="58472">
    <molecule id="Q06710-3"/>
</dbReference>
<dbReference type="ProteomicsDB" id="58473">
    <molecule id="Q06710-4"/>
</dbReference>
<dbReference type="ProteomicsDB" id="58474">
    <molecule id="Q06710-5"/>
</dbReference>
<dbReference type="Antibodypedia" id="9626">
    <property type="antibodies" value="997 antibodies from 48 providers"/>
</dbReference>
<dbReference type="DNASU" id="7849"/>
<dbReference type="Ensembl" id="ENST00000263334.9">
    <molecule id="Q06710-1"/>
    <property type="protein sequence ID" value="ENSP00000263334.6"/>
    <property type="gene ID" value="ENSG00000125618.18"/>
</dbReference>
<dbReference type="Ensembl" id="ENST00000263335.11">
    <molecule id="Q06710-4"/>
    <property type="protein sequence ID" value="ENSP00000263335.7"/>
    <property type="gene ID" value="ENSG00000125618.18"/>
</dbReference>
<dbReference type="Ensembl" id="ENST00000348715.9">
    <molecule id="Q06710-3"/>
    <property type="protein sequence ID" value="ENSP00000314750.5"/>
    <property type="gene ID" value="ENSG00000125618.18"/>
</dbReference>
<dbReference type="Ensembl" id="ENST00000397647.7">
    <molecule id="Q06710-5"/>
    <property type="protein sequence ID" value="ENSP00000380768.3"/>
    <property type="gene ID" value="ENSG00000125618.18"/>
</dbReference>
<dbReference type="Ensembl" id="ENST00000429538.8">
    <molecule id="Q06710-1"/>
    <property type="protein sequence ID" value="ENSP00000395498.3"/>
    <property type="gene ID" value="ENSG00000125618.18"/>
</dbReference>
<dbReference type="Ensembl" id="ENST00000468980.4">
    <molecule id="Q06710-2"/>
    <property type="protein sequence ID" value="ENSP00000451240.2"/>
    <property type="gene ID" value="ENSG00000125618.18"/>
</dbReference>
<dbReference type="GeneID" id="7849"/>
<dbReference type="KEGG" id="hsa:7849"/>
<dbReference type="MANE-Select" id="ENST00000429538.8">
    <property type="protein sequence ID" value="ENSP00000395498.3"/>
    <property type="RefSeq nucleotide sequence ID" value="NM_003466.4"/>
    <property type="RefSeq protein sequence ID" value="NP_003457.1"/>
</dbReference>
<dbReference type="UCSC" id="uc002tjm.4">
    <molecule id="Q06710-1"/>
    <property type="organism name" value="human"/>
</dbReference>
<dbReference type="AGR" id="HGNC:8622"/>
<dbReference type="CTD" id="7849"/>
<dbReference type="DisGeNET" id="7849"/>
<dbReference type="GeneCards" id="PAX8"/>
<dbReference type="HGNC" id="HGNC:8622">
    <property type="gene designation" value="PAX8"/>
</dbReference>
<dbReference type="HPA" id="ENSG00000125618">
    <property type="expression patterns" value="Group enriched (kidney, thyroid gland)"/>
</dbReference>
<dbReference type="MalaCards" id="PAX8"/>
<dbReference type="MIM" id="167415">
    <property type="type" value="gene"/>
</dbReference>
<dbReference type="MIM" id="218700">
    <property type="type" value="phenotype"/>
</dbReference>
<dbReference type="neXtProt" id="NX_Q06710"/>
<dbReference type="OpenTargets" id="ENSG00000125618"/>
<dbReference type="Orphanet" id="95713">
    <property type="disease" value="Athyreosis"/>
</dbReference>
<dbReference type="Orphanet" id="146">
    <property type="disease" value="Differentiated thyroid carcinoma"/>
</dbReference>
<dbReference type="Orphanet" id="95712">
    <property type="disease" value="Thyroid ectopia"/>
</dbReference>
<dbReference type="Orphanet" id="95720">
    <property type="disease" value="Thyroid hypoplasia"/>
</dbReference>
<dbReference type="PharmGKB" id="PA32962"/>
<dbReference type="VEuPathDB" id="HostDB:ENSG00000125618"/>
<dbReference type="eggNOG" id="KOG3862">
    <property type="taxonomic scope" value="Eukaryota"/>
</dbReference>
<dbReference type="GeneTree" id="ENSGT00940000161868"/>
<dbReference type="HOGENOM" id="CLU_019281_1_3_1"/>
<dbReference type="InParanoid" id="Q06710"/>
<dbReference type="OMA" id="CNISCYA"/>
<dbReference type="OrthoDB" id="3225452at2759"/>
<dbReference type="PAN-GO" id="Q06710">
    <property type="GO annotations" value="4 GO annotations based on evolutionary models"/>
</dbReference>
<dbReference type="PhylomeDB" id="Q06710"/>
<dbReference type="TreeFam" id="TF315397"/>
<dbReference type="PathwayCommons" id="Q06710"/>
<dbReference type="Reactome" id="R-HSA-9761174">
    <property type="pathway name" value="Formation of intermediate mesoderm"/>
</dbReference>
<dbReference type="Reactome" id="R-HSA-9830364">
    <property type="pathway name" value="Formation of the nephric duct"/>
</dbReference>
<dbReference type="SignaLink" id="Q06710"/>
<dbReference type="SIGNOR" id="Q06710"/>
<dbReference type="BioGRID-ORCS" id="7849">
    <property type="hits" value="56 hits in 1172 CRISPR screens"/>
</dbReference>
<dbReference type="ChiTaRS" id="PAX8">
    <property type="organism name" value="human"/>
</dbReference>
<dbReference type="EvolutionaryTrace" id="Q06710"/>
<dbReference type="GeneWiki" id="PAX8"/>
<dbReference type="GenomeRNAi" id="7849"/>
<dbReference type="Pharos" id="Q06710">
    <property type="development level" value="Tchem"/>
</dbReference>
<dbReference type="PRO" id="PR:Q06710"/>
<dbReference type="Proteomes" id="UP000005640">
    <property type="component" value="Chromosome 2"/>
</dbReference>
<dbReference type="RNAct" id="Q06710">
    <property type="molecule type" value="protein"/>
</dbReference>
<dbReference type="Bgee" id="ENSG00000125618">
    <property type="expression patterns" value="Expressed in right lobe of thyroid gland and 179 other cell types or tissues"/>
</dbReference>
<dbReference type="ExpressionAtlas" id="Q06710">
    <property type="expression patterns" value="baseline and differential"/>
</dbReference>
<dbReference type="GO" id="GO:0000785">
    <property type="term" value="C:chromatin"/>
    <property type="evidence" value="ECO:0000247"/>
    <property type="project" value="NTNU_SB"/>
</dbReference>
<dbReference type="GO" id="GO:0005654">
    <property type="term" value="C:nucleoplasm"/>
    <property type="evidence" value="ECO:0000314"/>
    <property type="project" value="HPA"/>
</dbReference>
<dbReference type="GO" id="GO:0005634">
    <property type="term" value="C:nucleus"/>
    <property type="evidence" value="ECO:0000314"/>
    <property type="project" value="UniProtKB"/>
</dbReference>
<dbReference type="GO" id="GO:0003677">
    <property type="term" value="F:DNA binding"/>
    <property type="evidence" value="ECO:0000314"/>
    <property type="project" value="UniProtKB"/>
</dbReference>
<dbReference type="GO" id="GO:0003700">
    <property type="term" value="F:DNA-binding transcription factor activity"/>
    <property type="evidence" value="ECO:0000314"/>
    <property type="project" value="UniProtKB"/>
</dbReference>
<dbReference type="GO" id="GO:0000981">
    <property type="term" value="F:DNA-binding transcription factor activity, RNA polymerase II-specific"/>
    <property type="evidence" value="ECO:0000247"/>
    <property type="project" value="NTNU_SB"/>
</dbReference>
<dbReference type="GO" id="GO:0000978">
    <property type="term" value="F:RNA polymerase II cis-regulatory region sequence-specific DNA binding"/>
    <property type="evidence" value="ECO:0000314"/>
    <property type="project" value="UniProtKB"/>
</dbReference>
<dbReference type="GO" id="GO:1990837">
    <property type="term" value="F:sequence-specific double-stranded DNA binding"/>
    <property type="evidence" value="ECO:0000314"/>
    <property type="project" value="ARUK-UCL"/>
</dbReference>
<dbReference type="GO" id="GO:0004996">
    <property type="term" value="F:thyroid-stimulating hormone receptor activity"/>
    <property type="evidence" value="ECO:0000304"/>
    <property type="project" value="ProtInc"/>
</dbReference>
<dbReference type="GO" id="GO:0000976">
    <property type="term" value="F:transcription cis-regulatory region binding"/>
    <property type="evidence" value="ECO:0000314"/>
    <property type="project" value="UniProtKB"/>
</dbReference>
<dbReference type="GO" id="GO:0009653">
    <property type="term" value="P:anatomical structure morphogenesis"/>
    <property type="evidence" value="ECO:0000304"/>
    <property type="project" value="ProtInc"/>
</dbReference>
<dbReference type="GO" id="GO:0001658">
    <property type="term" value="P:branching involved in ureteric bud morphogenesis"/>
    <property type="evidence" value="ECO:0000270"/>
    <property type="project" value="UniProtKB"/>
</dbReference>
<dbReference type="GO" id="GO:0071371">
    <property type="term" value="P:cellular response to gonadotropin stimulus"/>
    <property type="evidence" value="ECO:0000314"/>
    <property type="project" value="UniProtKB"/>
</dbReference>
<dbReference type="GO" id="GO:0007417">
    <property type="term" value="P:central nervous system development"/>
    <property type="evidence" value="ECO:0000270"/>
    <property type="project" value="UniProtKB"/>
</dbReference>
<dbReference type="GO" id="GO:0006351">
    <property type="term" value="P:DNA-templated transcription"/>
    <property type="evidence" value="ECO:0000314"/>
    <property type="project" value="UniProtKB"/>
</dbReference>
<dbReference type="GO" id="GO:0042472">
    <property type="term" value="P:inner ear morphogenesis"/>
    <property type="evidence" value="ECO:0000250"/>
    <property type="project" value="UniProtKB"/>
</dbReference>
<dbReference type="GO" id="GO:0001822">
    <property type="term" value="P:kidney development"/>
    <property type="evidence" value="ECO:0000270"/>
    <property type="project" value="UniProtKB"/>
</dbReference>
<dbReference type="GO" id="GO:0003337">
    <property type="term" value="P:mesenchymal to epithelial transition involved in metanephros morphogenesis"/>
    <property type="evidence" value="ECO:0000270"/>
    <property type="project" value="UniProtKB"/>
</dbReference>
<dbReference type="GO" id="GO:0001823">
    <property type="term" value="P:mesonephros development"/>
    <property type="evidence" value="ECO:0000250"/>
    <property type="project" value="UniProtKB"/>
</dbReference>
<dbReference type="GO" id="GO:0072278">
    <property type="term" value="P:metanephric comma-shaped body morphogenesis"/>
    <property type="evidence" value="ECO:0000270"/>
    <property type="project" value="UniProtKB"/>
</dbReference>
<dbReference type="GO" id="GO:0072221">
    <property type="term" value="P:metanephric distal convoluted tubule development"/>
    <property type="evidence" value="ECO:0000250"/>
    <property type="project" value="UniProtKB"/>
</dbReference>
<dbReference type="GO" id="GO:0072207">
    <property type="term" value="P:metanephric epithelium development"/>
    <property type="evidence" value="ECO:0000270"/>
    <property type="project" value="UniProtKB"/>
</dbReference>
<dbReference type="GO" id="GO:0072289">
    <property type="term" value="P:metanephric nephron tubule formation"/>
    <property type="evidence" value="ECO:0000250"/>
    <property type="project" value="UniProtKB"/>
</dbReference>
<dbReference type="GO" id="GO:0072284">
    <property type="term" value="P:metanephric S-shaped body morphogenesis"/>
    <property type="evidence" value="ECO:0000270"/>
    <property type="project" value="UniProtKB"/>
</dbReference>
<dbReference type="GO" id="GO:1900215">
    <property type="term" value="P:negative regulation of apoptotic process involved in metanephric collecting duct development"/>
    <property type="evidence" value="ECO:0000250"/>
    <property type="project" value="UniProtKB"/>
</dbReference>
<dbReference type="GO" id="GO:1900218">
    <property type="term" value="P:negative regulation of apoptotic process involved in metanephric nephron tubule development"/>
    <property type="evidence" value="ECO:0000250"/>
    <property type="project" value="UniProtKB"/>
</dbReference>
<dbReference type="GO" id="GO:0010667">
    <property type="term" value="P:negative regulation of cardiac muscle cell apoptotic process"/>
    <property type="evidence" value="ECO:0007669"/>
    <property type="project" value="Ensembl"/>
</dbReference>
<dbReference type="GO" id="GO:0072305">
    <property type="term" value="P:negative regulation of mesenchymal cell apoptotic process involved in metanephric nephron morphogenesis"/>
    <property type="evidence" value="ECO:0000250"/>
    <property type="project" value="UniProtKB"/>
</dbReference>
<dbReference type="GO" id="GO:1900212">
    <property type="term" value="P:negative regulation of mesenchymal cell apoptotic process involved in metanephros development"/>
    <property type="evidence" value="ECO:0000250"/>
    <property type="project" value="UniProtKB"/>
</dbReference>
<dbReference type="GO" id="GO:0007399">
    <property type="term" value="P:nervous system development"/>
    <property type="evidence" value="ECO:0000318"/>
    <property type="project" value="GO_Central"/>
</dbReference>
<dbReference type="GO" id="GO:0071599">
    <property type="term" value="P:otic vesicle development"/>
    <property type="evidence" value="ECO:0000270"/>
    <property type="project" value="UniProtKB"/>
</dbReference>
<dbReference type="GO" id="GO:0090190">
    <property type="term" value="P:positive regulation of branching involved in ureteric bud morphogenesis"/>
    <property type="evidence" value="ECO:0000250"/>
    <property type="project" value="UniProtKB"/>
</dbReference>
<dbReference type="GO" id="GO:0045893">
    <property type="term" value="P:positive regulation of DNA-templated transcription"/>
    <property type="evidence" value="ECO:0000314"/>
    <property type="project" value="UniProtKB"/>
</dbReference>
<dbReference type="GO" id="GO:0072108">
    <property type="term" value="P:positive regulation of mesenchymal to epithelial transition involved in metanephros morphogenesis"/>
    <property type="evidence" value="ECO:0000250"/>
    <property type="project" value="UniProtKB"/>
</dbReference>
<dbReference type="GO" id="GO:2000594">
    <property type="term" value="P:positive regulation of metanephric DCT cell differentiation"/>
    <property type="evidence" value="ECO:0000250"/>
    <property type="project" value="UniProtKB"/>
</dbReference>
<dbReference type="GO" id="GO:2000611">
    <property type="term" value="P:positive regulation of thyroid hormone generation"/>
    <property type="evidence" value="ECO:0000315"/>
    <property type="project" value="UniProtKB"/>
</dbReference>
<dbReference type="GO" id="GO:0045944">
    <property type="term" value="P:positive regulation of transcription by RNA polymerase II"/>
    <property type="evidence" value="ECO:0000314"/>
    <property type="project" value="UniProtKB"/>
</dbReference>
<dbReference type="GO" id="GO:0039003">
    <property type="term" value="P:pronephric field specification"/>
    <property type="evidence" value="ECO:0000250"/>
    <property type="project" value="UniProtKB"/>
</dbReference>
<dbReference type="GO" id="GO:0048793">
    <property type="term" value="P:pronephros development"/>
    <property type="evidence" value="ECO:0000250"/>
    <property type="project" value="UniProtKB"/>
</dbReference>
<dbReference type="GO" id="GO:0042981">
    <property type="term" value="P:regulation of apoptotic process"/>
    <property type="evidence" value="ECO:0000250"/>
    <property type="project" value="UniProtKB"/>
</dbReference>
<dbReference type="GO" id="GO:0072307">
    <property type="term" value="P:regulation of metanephric nephron tubule epithelial cell differentiation"/>
    <property type="evidence" value="ECO:0000250"/>
    <property type="project" value="UniProtKB"/>
</dbReference>
<dbReference type="GO" id="GO:2000612">
    <property type="term" value="P:regulation of thyroid-stimulating hormone secretion"/>
    <property type="evidence" value="ECO:0000315"/>
    <property type="project" value="UniProtKB"/>
</dbReference>
<dbReference type="GO" id="GO:0006357">
    <property type="term" value="P:regulation of transcription by RNA polymerase II"/>
    <property type="evidence" value="ECO:0000318"/>
    <property type="project" value="GO_Central"/>
</dbReference>
<dbReference type="GO" id="GO:0007423">
    <property type="term" value="P:sensory organ development"/>
    <property type="evidence" value="ECO:0000318"/>
    <property type="project" value="GO_Central"/>
</dbReference>
<dbReference type="GO" id="GO:0030878">
    <property type="term" value="P:thyroid gland development"/>
    <property type="evidence" value="ECO:0000315"/>
    <property type="project" value="UniProtKB"/>
</dbReference>
<dbReference type="GO" id="GO:0001655">
    <property type="term" value="P:urogenital system development"/>
    <property type="evidence" value="ECO:0000250"/>
    <property type="project" value="UniProtKB"/>
</dbReference>
<dbReference type="GO" id="GO:0003281">
    <property type="term" value="P:ventricular septum development"/>
    <property type="evidence" value="ECO:0007669"/>
    <property type="project" value="Ensembl"/>
</dbReference>
<dbReference type="CDD" id="cd00131">
    <property type="entry name" value="PAX"/>
    <property type="match status" value="1"/>
</dbReference>
<dbReference type="DisProt" id="DP01517"/>
<dbReference type="FunFam" id="1.10.10.10:FF:000013">
    <property type="entry name" value="Paired box 8 isoform 1"/>
    <property type="match status" value="1"/>
</dbReference>
<dbReference type="FunFam" id="1.10.10.10:FF:000003">
    <property type="entry name" value="Paired box protein Pax-6"/>
    <property type="match status" value="1"/>
</dbReference>
<dbReference type="Gene3D" id="1.10.10.10">
    <property type="entry name" value="Winged helix-like DNA-binding domain superfamily/Winged helix DNA-binding domain"/>
    <property type="match status" value="2"/>
</dbReference>
<dbReference type="InterPro" id="IPR009057">
    <property type="entry name" value="Homeodomain-like_sf"/>
</dbReference>
<dbReference type="InterPro" id="IPR043182">
    <property type="entry name" value="PAIRED_DNA-bd_dom"/>
</dbReference>
<dbReference type="InterPro" id="IPR001523">
    <property type="entry name" value="Paired_dom"/>
</dbReference>
<dbReference type="InterPro" id="IPR022130">
    <property type="entry name" value="Pax2_C"/>
</dbReference>
<dbReference type="InterPro" id="IPR043565">
    <property type="entry name" value="PAX_fam"/>
</dbReference>
<dbReference type="InterPro" id="IPR036388">
    <property type="entry name" value="WH-like_DNA-bd_sf"/>
</dbReference>
<dbReference type="PANTHER" id="PTHR45636">
    <property type="entry name" value="PAIRED BOX PROTEIN PAX-6-RELATED-RELATED"/>
    <property type="match status" value="1"/>
</dbReference>
<dbReference type="PANTHER" id="PTHR45636:SF6">
    <property type="entry name" value="PAIRED BOX PROTEIN PAX-8"/>
    <property type="match status" value="1"/>
</dbReference>
<dbReference type="Pfam" id="PF00292">
    <property type="entry name" value="PAX"/>
    <property type="match status" value="1"/>
</dbReference>
<dbReference type="Pfam" id="PF12403">
    <property type="entry name" value="Pax2_C"/>
    <property type="match status" value="1"/>
</dbReference>
<dbReference type="PRINTS" id="PR00027">
    <property type="entry name" value="PAIREDBOX"/>
</dbReference>
<dbReference type="SMART" id="SM00351">
    <property type="entry name" value="PAX"/>
    <property type="match status" value="1"/>
</dbReference>
<dbReference type="SUPFAM" id="SSF46689">
    <property type="entry name" value="Homeodomain-like"/>
    <property type="match status" value="1"/>
</dbReference>
<dbReference type="PROSITE" id="PS00034">
    <property type="entry name" value="PAIRED_1"/>
    <property type="match status" value="1"/>
</dbReference>
<dbReference type="PROSITE" id="PS51057">
    <property type="entry name" value="PAIRED_2"/>
    <property type="match status" value="1"/>
</dbReference>
<keyword id="KW-0002">3D-structure</keyword>
<keyword id="KW-0025">Alternative splicing</keyword>
<keyword id="KW-0984">Congenital hypothyroidism</keyword>
<keyword id="KW-0217">Developmental protein</keyword>
<keyword id="KW-0221">Differentiation</keyword>
<keyword id="KW-0225">Disease variant</keyword>
<keyword id="KW-0238">DNA-binding</keyword>
<keyword id="KW-0539">Nucleus</keyword>
<keyword id="KW-0563">Paired box</keyword>
<keyword id="KW-0597">Phosphoprotein</keyword>
<keyword id="KW-1267">Proteomics identification</keyword>
<keyword id="KW-1185">Reference proteome</keyword>
<keyword id="KW-0804">Transcription</keyword>
<keyword id="KW-0805">Transcription regulation</keyword>
<organism>
    <name type="scientific">Homo sapiens</name>
    <name type="common">Human</name>
    <dbReference type="NCBI Taxonomy" id="9606"/>
    <lineage>
        <taxon>Eukaryota</taxon>
        <taxon>Metazoa</taxon>
        <taxon>Chordata</taxon>
        <taxon>Craniata</taxon>
        <taxon>Vertebrata</taxon>
        <taxon>Euteleostomi</taxon>
        <taxon>Mammalia</taxon>
        <taxon>Eutheria</taxon>
        <taxon>Euarchontoglires</taxon>
        <taxon>Primates</taxon>
        <taxon>Haplorrhini</taxon>
        <taxon>Catarrhini</taxon>
        <taxon>Hominidae</taxon>
        <taxon>Homo</taxon>
    </lineage>
</organism>
<protein>
    <recommendedName>
        <fullName>Paired box protein Pax-8</fullName>
    </recommendedName>
</protein>